<organism>
    <name type="scientific">Stigeoclonium helveticum</name>
    <name type="common">Green alga</name>
    <dbReference type="NCBI Taxonomy" id="55999"/>
    <lineage>
        <taxon>Eukaryota</taxon>
        <taxon>Viridiplantae</taxon>
        <taxon>Chlorophyta</taxon>
        <taxon>core chlorophytes</taxon>
        <taxon>Chlorophyceae</taxon>
        <taxon>OCC clade</taxon>
        <taxon>Chaetophorales</taxon>
        <taxon>Chaetophoraceae</taxon>
        <taxon>Stigeoclonium</taxon>
    </lineage>
</organism>
<gene>
    <name evidence="1" type="primary">psb30</name>
    <name evidence="1" type="synonym">ycf12</name>
</gene>
<sequence>MNNLEVVFQLMALFFVLAAGPAVVVLVASQKGNL</sequence>
<comment type="function">
    <text evidence="1">A core subunit of photosystem II (PSII), probably helps stabilize the reaction center.</text>
</comment>
<comment type="subunit">
    <text evidence="1">PSII is composed of 1 copy each of membrane proteins PsbA, PsbB, PsbC, PsbD, PsbE, PsbF, PsbH, PsbI, PsbJ, PsbK, PsbL, PsbM, PsbT, PsbX, PsbY, PsbZ, Psb30/Ycf12, peripheral proteins of the oxygen-evolving complex and a large number of cofactors. It forms dimeric complexes.</text>
</comment>
<comment type="subcellular location">
    <subcellularLocation>
        <location evidence="1">Plastid</location>
        <location evidence="1">Chloroplast thylakoid membrane</location>
        <topology evidence="1">Single-pass membrane protein</topology>
    </subcellularLocation>
</comment>
<comment type="similarity">
    <text evidence="1">Belongs to the Psb30/Ycf12 family.</text>
</comment>
<evidence type="ECO:0000255" key="1">
    <source>
        <dbReference type="HAMAP-Rule" id="MF_01329"/>
    </source>
</evidence>
<accession>Q06SC8</accession>
<proteinExistence type="inferred from homology"/>
<protein>
    <recommendedName>
        <fullName evidence="1">Photosystem II reaction center protein Psb30</fullName>
    </recommendedName>
    <alternativeName>
        <fullName evidence="1">Photosystem II reaction center protein Ycf12</fullName>
    </alternativeName>
</protein>
<geneLocation type="chloroplast"/>
<keyword id="KW-0150">Chloroplast</keyword>
<keyword id="KW-0472">Membrane</keyword>
<keyword id="KW-0602">Photosynthesis</keyword>
<keyword id="KW-0604">Photosystem II</keyword>
<keyword id="KW-0934">Plastid</keyword>
<keyword id="KW-0793">Thylakoid</keyword>
<keyword id="KW-0812">Transmembrane</keyword>
<keyword id="KW-1133">Transmembrane helix</keyword>
<name>PSB30_STIHE</name>
<dbReference type="EMBL" id="DQ630521">
    <property type="protein sequence ID" value="ABF60204.1"/>
    <property type="molecule type" value="Genomic_DNA"/>
</dbReference>
<dbReference type="RefSeq" id="YP_764438.1">
    <property type="nucleotide sequence ID" value="NC_008372.1"/>
</dbReference>
<dbReference type="SMR" id="Q06SC8"/>
<dbReference type="GeneID" id="4308435"/>
<dbReference type="GO" id="GO:0009535">
    <property type="term" value="C:chloroplast thylakoid membrane"/>
    <property type="evidence" value="ECO:0007669"/>
    <property type="project" value="UniProtKB-SubCell"/>
</dbReference>
<dbReference type="GO" id="GO:0009523">
    <property type="term" value="C:photosystem II"/>
    <property type="evidence" value="ECO:0007669"/>
    <property type="project" value="UniProtKB-KW"/>
</dbReference>
<dbReference type="GO" id="GO:0015979">
    <property type="term" value="P:photosynthesis"/>
    <property type="evidence" value="ECO:0007669"/>
    <property type="project" value="UniProtKB-KW"/>
</dbReference>
<dbReference type="HAMAP" id="MF_01329">
    <property type="entry name" value="PSII_Psb30_Ycf12"/>
    <property type="match status" value="1"/>
</dbReference>
<dbReference type="InterPro" id="IPR010284">
    <property type="entry name" value="PSII_Ycf12_core-subunit"/>
</dbReference>
<dbReference type="NCBIfam" id="NF010239">
    <property type="entry name" value="PRK13686.1"/>
    <property type="match status" value="1"/>
</dbReference>
<dbReference type="Pfam" id="PF05969">
    <property type="entry name" value="PSII_Ycf12"/>
    <property type="match status" value="1"/>
</dbReference>
<feature type="chain" id="PRO_0000276560" description="Photosystem II reaction center protein Psb30">
    <location>
        <begin position="1"/>
        <end position="34"/>
    </location>
</feature>
<feature type="transmembrane region" description="Helical" evidence="1">
    <location>
        <begin position="6"/>
        <end position="26"/>
    </location>
</feature>
<reference key="1">
    <citation type="journal article" date="2006" name="Mol. Genet. Genomics">
        <title>Distinctive architecture of the chloroplast genome in the chlorophycean green alga Stigeoclonium helveticum.</title>
        <authorList>
            <person name="Belanger A.-S."/>
            <person name="Brouard J.-S."/>
            <person name="Charlebois P."/>
            <person name="Otis C."/>
            <person name="Lemieux C."/>
            <person name="Turmel M."/>
        </authorList>
    </citation>
    <scope>NUCLEOTIDE SEQUENCE [LARGE SCALE GENOMIC DNA]</scope>
    <source>
        <strain>UTEX 441</strain>
    </source>
</reference>